<organism>
    <name type="scientific">Mesorhizobium japonicum (strain LMG 29417 / CECT 9101 / MAFF 303099)</name>
    <name type="common">Mesorhizobium loti (strain MAFF 303099)</name>
    <dbReference type="NCBI Taxonomy" id="266835"/>
    <lineage>
        <taxon>Bacteria</taxon>
        <taxon>Pseudomonadati</taxon>
        <taxon>Pseudomonadota</taxon>
        <taxon>Alphaproteobacteria</taxon>
        <taxon>Hyphomicrobiales</taxon>
        <taxon>Phyllobacteriaceae</taxon>
        <taxon>Mesorhizobium</taxon>
    </lineage>
</organism>
<feature type="chain" id="PRO_0000172196" description="Homoserine kinase">
    <location>
        <begin position="1"/>
        <end position="320"/>
    </location>
</feature>
<reference key="1">
    <citation type="journal article" date="2000" name="DNA Res.">
        <title>Complete genome structure of the nitrogen-fixing symbiotic bacterium Mesorhizobium loti.</title>
        <authorList>
            <person name="Kaneko T."/>
            <person name="Nakamura Y."/>
            <person name="Sato S."/>
            <person name="Asamizu E."/>
            <person name="Kato T."/>
            <person name="Sasamoto S."/>
            <person name="Watanabe A."/>
            <person name="Idesawa K."/>
            <person name="Ishikawa A."/>
            <person name="Kawashima K."/>
            <person name="Kimura T."/>
            <person name="Kishida Y."/>
            <person name="Kiyokawa C."/>
            <person name="Kohara M."/>
            <person name="Matsumoto M."/>
            <person name="Matsuno A."/>
            <person name="Mochizuki Y."/>
            <person name="Nakayama S."/>
            <person name="Nakazaki N."/>
            <person name="Shimpo S."/>
            <person name="Sugimoto M."/>
            <person name="Takeuchi C."/>
            <person name="Yamada M."/>
            <person name="Tabata S."/>
        </authorList>
    </citation>
    <scope>NUCLEOTIDE SEQUENCE [LARGE SCALE GENOMIC DNA]</scope>
    <source>
        <strain>LMG 29417 / CECT 9101 / MAFF 303099</strain>
    </source>
</reference>
<keyword id="KW-0028">Amino-acid biosynthesis</keyword>
<keyword id="KW-0067">ATP-binding</keyword>
<keyword id="KW-0418">Kinase</keyword>
<keyword id="KW-0547">Nucleotide-binding</keyword>
<keyword id="KW-0791">Threonine biosynthesis</keyword>
<keyword id="KW-0808">Transferase</keyword>
<dbReference type="EC" id="2.7.1.39" evidence="1"/>
<dbReference type="EMBL" id="BA000012">
    <property type="protein sequence ID" value="BAB53591.1"/>
    <property type="molecule type" value="Genomic_DNA"/>
</dbReference>
<dbReference type="RefSeq" id="WP_010914898.1">
    <property type="nucleotide sequence ID" value="NC_002678.2"/>
</dbReference>
<dbReference type="SMR" id="Q985W2"/>
<dbReference type="KEGG" id="mlo:mlr7503"/>
<dbReference type="PATRIC" id="fig|266835.9.peg.5994"/>
<dbReference type="eggNOG" id="COG2334">
    <property type="taxonomic scope" value="Bacteria"/>
</dbReference>
<dbReference type="HOGENOM" id="CLU_053300_0_0_5"/>
<dbReference type="UniPathway" id="UPA00050">
    <property type="reaction ID" value="UER00064"/>
</dbReference>
<dbReference type="Proteomes" id="UP000000552">
    <property type="component" value="Chromosome"/>
</dbReference>
<dbReference type="GO" id="GO:0005524">
    <property type="term" value="F:ATP binding"/>
    <property type="evidence" value="ECO:0007669"/>
    <property type="project" value="UniProtKB-KW"/>
</dbReference>
<dbReference type="GO" id="GO:0004413">
    <property type="term" value="F:homoserine kinase activity"/>
    <property type="evidence" value="ECO:0007669"/>
    <property type="project" value="UniProtKB-UniRule"/>
</dbReference>
<dbReference type="GO" id="GO:0009088">
    <property type="term" value="P:threonine biosynthetic process"/>
    <property type="evidence" value="ECO:0007669"/>
    <property type="project" value="UniProtKB-UniRule"/>
</dbReference>
<dbReference type="CDD" id="cd05153">
    <property type="entry name" value="HomoserineK_II"/>
    <property type="match status" value="1"/>
</dbReference>
<dbReference type="Gene3D" id="3.90.1200.10">
    <property type="match status" value="1"/>
</dbReference>
<dbReference type="Gene3D" id="3.30.200.20">
    <property type="entry name" value="Phosphorylase Kinase, domain 1"/>
    <property type="match status" value="1"/>
</dbReference>
<dbReference type="HAMAP" id="MF_00301">
    <property type="entry name" value="Homoser_kinase_2"/>
    <property type="match status" value="1"/>
</dbReference>
<dbReference type="InterPro" id="IPR002575">
    <property type="entry name" value="Aminoglycoside_PTrfase"/>
</dbReference>
<dbReference type="InterPro" id="IPR005280">
    <property type="entry name" value="Homoserine_kinase_II"/>
</dbReference>
<dbReference type="InterPro" id="IPR011009">
    <property type="entry name" value="Kinase-like_dom_sf"/>
</dbReference>
<dbReference type="InterPro" id="IPR050249">
    <property type="entry name" value="Pseudomonas-type_ThrB"/>
</dbReference>
<dbReference type="NCBIfam" id="NF003558">
    <property type="entry name" value="PRK05231.1"/>
    <property type="match status" value="1"/>
</dbReference>
<dbReference type="NCBIfam" id="TIGR00938">
    <property type="entry name" value="thrB_alt"/>
    <property type="match status" value="1"/>
</dbReference>
<dbReference type="PANTHER" id="PTHR21064:SF6">
    <property type="entry name" value="AMINOGLYCOSIDE PHOSPHOTRANSFERASE DOMAIN-CONTAINING PROTEIN"/>
    <property type="match status" value="1"/>
</dbReference>
<dbReference type="PANTHER" id="PTHR21064">
    <property type="entry name" value="AMINOGLYCOSIDE PHOSPHOTRANSFERASE DOMAIN-CONTAINING PROTEIN-RELATED"/>
    <property type="match status" value="1"/>
</dbReference>
<dbReference type="Pfam" id="PF01636">
    <property type="entry name" value="APH"/>
    <property type="match status" value="1"/>
</dbReference>
<dbReference type="SUPFAM" id="SSF56112">
    <property type="entry name" value="Protein kinase-like (PK-like)"/>
    <property type="match status" value="1"/>
</dbReference>
<accession>Q985W2</accession>
<evidence type="ECO:0000255" key="1">
    <source>
        <dbReference type="HAMAP-Rule" id="MF_00301"/>
    </source>
</evidence>
<comment type="catalytic activity">
    <reaction evidence="1">
        <text>L-homoserine + ATP = O-phospho-L-homoserine + ADP + H(+)</text>
        <dbReference type="Rhea" id="RHEA:13985"/>
        <dbReference type="ChEBI" id="CHEBI:15378"/>
        <dbReference type="ChEBI" id="CHEBI:30616"/>
        <dbReference type="ChEBI" id="CHEBI:57476"/>
        <dbReference type="ChEBI" id="CHEBI:57590"/>
        <dbReference type="ChEBI" id="CHEBI:456216"/>
        <dbReference type="EC" id="2.7.1.39"/>
    </reaction>
</comment>
<comment type="pathway">
    <text evidence="1">Amino-acid biosynthesis; L-threonine biosynthesis; L-threonine from L-aspartate: step 4/5.</text>
</comment>
<comment type="similarity">
    <text evidence="1">Belongs to the pseudomonas-type ThrB family.</text>
</comment>
<gene>
    <name evidence="1" type="primary">thrB</name>
    <name type="ordered locus">mlr7503</name>
</gene>
<name>KHSE_RHILO</name>
<sequence>MAVYTDVAEGELGAFLKHYPVGDLLSYKGIAEGTENSNFLLHTSSGSYILTLYEKRVEKADLPFFLGLMGHLANKGVSCPLPVTAHDGSVIGTLAGRPAVIITFLEGLSLRRPTATHCAEVGKALAALHLAGADFPMTRPNALAIDGWRKLWNAARDRADEVEPGLAAEVDADFADFERNWPRGLPAGIIHADLFPDNVFFLGEKLSGLIDFYFACDDLYAYDVATCLNAWCFEKDFSFNLTKGKALLAGYQSVRPLSGEEKAALPMLSRGSALRFMLTRLYDWLTVSDGGLVMKRDPTEYIRRMRFHRAIKSASEYGLA</sequence>
<protein>
    <recommendedName>
        <fullName evidence="1">Homoserine kinase</fullName>
        <shortName evidence="1">HK</shortName>
        <shortName evidence="1">HSK</shortName>
        <ecNumber evidence="1">2.7.1.39</ecNumber>
    </recommendedName>
</protein>
<proteinExistence type="inferred from homology"/>